<reference key="1">
    <citation type="journal article" date="2005" name="BMC Biol.">
        <title>The complete chloroplast DNA sequences of the charophycean green algae Staurastrum and Zygnema reveal that the chloroplast genome underwent extensive changes during the evolution of the Zygnematales.</title>
        <authorList>
            <person name="Turmel M."/>
            <person name="Otis C."/>
            <person name="Lemieux C."/>
        </authorList>
    </citation>
    <scope>NUCLEOTIDE SEQUENCE [LARGE SCALE GENOMIC DNA]</scope>
</reference>
<feature type="chain" id="PRO_0000233688" description="Cytochrome b6-f complex subunit 6">
    <location>
        <begin position="1"/>
        <end position="31"/>
    </location>
</feature>
<feature type="transmembrane region" description="Helical" evidence="1">
    <location>
        <begin position="4"/>
        <end position="24"/>
    </location>
</feature>
<keyword id="KW-0150">Chloroplast</keyword>
<keyword id="KW-0249">Electron transport</keyword>
<keyword id="KW-0472">Membrane</keyword>
<keyword id="KW-0602">Photosynthesis</keyword>
<keyword id="KW-0934">Plastid</keyword>
<keyword id="KW-0793">Thylakoid</keyword>
<keyword id="KW-0812">Transmembrane</keyword>
<keyword id="KW-1133">Transmembrane helix</keyword>
<keyword id="KW-0813">Transport</keyword>
<accession>Q32RT4</accession>
<geneLocation type="chloroplast"/>
<gene>
    <name evidence="1" type="primary">petL</name>
</gene>
<comment type="function">
    <text evidence="1">Component of the cytochrome b6-f complex, which mediates electron transfer between photosystem II (PSII) and photosystem I (PSI), cyclic electron flow around PSI, and state transitions. PetL is important for photoautotrophic growth as well as for electron transfer efficiency and stability of the cytochrome b6-f complex.</text>
</comment>
<comment type="subunit">
    <text evidence="1">The 4 large subunits of the cytochrome b6-f complex are cytochrome b6, subunit IV (17 kDa polypeptide, PetD), cytochrome f and the Rieske protein, while the 4 small subunits are PetG, PetL, PetM and PetN. The complex functions as a dimer.</text>
</comment>
<comment type="subcellular location">
    <subcellularLocation>
        <location evidence="1">Plastid</location>
        <location evidence="1">Chloroplast thylakoid membrane</location>
        <topology evidence="1">Single-pass membrane protein</topology>
    </subcellularLocation>
</comment>
<comment type="similarity">
    <text evidence="1">Belongs to the PetL family.</text>
</comment>
<sequence length="31" mass="3443">MLTIISYFGLLLATLTFTIVLFVGLSKIQLI</sequence>
<evidence type="ECO:0000255" key="1">
    <source>
        <dbReference type="HAMAP-Rule" id="MF_00433"/>
    </source>
</evidence>
<protein>
    <recommendedName>
        <fullName evidence="1">Cytochrome b6-f complex subunit 6</fullName>
    </recommendedName>
    <alternativeName>
        <fullName evidence="1">Cytochrome b6-f complex subunit PetL</fullName>
    </alternativeName>
    <alternativeName>
        <fullName evidence="1">Cytochrome b6-f complex subunit VI</fullName>
    </alternativeName>
</protein>
<dbReference type="EMBL" id="AY958085">
    <property type="protein sequence ID" value="AAX45713.1"/>
    <property type="molecule type" value="Genomic_DNA"/>
</dbReference>
<dbReference type="RefSeq" id="YP_636442.1">
    <property type="nucleotide sequence ID" value="NC_008116.1"/>
</dbReference>
<dbReference type="SMR" id="Q32RT4"/>
<dbReference type="GeneID" id="4108554"/>
<dbReference type="GO" id="GO:0009535">
    <property type="term" value="C:chloroplast thylakoid membrane"/>
    <property type="evidence" value="ECO:0007669"/>
    <property type="project" value="UniProtKB-SubCell"/>
</dbReference>
<dbReference type="GO" id="GO:0009512">
    <property type="term" value="C:cytochrome b6f complex"/>
    <property type="evidence" value="ECO:0007669"/>
    <property type="project" value="InterPro"/>
</dbReference>
<dbReference type="GO" id="GO:0045158">
    <property type="term" value="F:electron transporter, transferring electrons within cytochrome b6/f complex of photosystem II activity"/>
    <property type="evidence" value="ECO:0007669"/>
    <property type="project" value="UniProtKB-UniRule"/>
</dbReference>
<dbReference type="GO" id="GO:0015979">
    <property type="term" value="P:photosynthesis"/>
    <property type="evidence" value="ECO:0007669"/>
    <property type="project" value="UniProtKB-KW"/>
</dbReference>
<dbReference type="HAMAP" id="MF_00433">
    <property type="entry name" value="Cytb6_f_PetL"/>
    <property type="match status" value="1"/>
</dbReference>
<dbReference type="InterPro" id="IPR007802">
    <property type="entry name" value="Cyt_b6/f_cplx_su6"/>
</dbReference>
<dbReference type="PANTHER" id="PTHR37266">
    <property type="entry name" value="CYTOCHROME B6-F COMPLEX SUBUNIT 6"/>
    <property type="match status" value="1"/>
</dbReference>
<dbReference type="PANTHER" id="PTHR37266:SF1">
    <property type="entry name" value="CYTOCHROME B6-F COMPLEX SUBUNIT 6"/>
    <property type="match status" value="1"/>
</dbReference>
<dbReference type="Pfam" id="PF05115">
    <property type="entry name" value="PetL"/>
    <property type="match status" value="1"/>
</dbReference>
<dbReference type="SUPFAM" id="SSF103436">
    <property type="entry name" value="PetL subunit of the cytochrome b6f complex"/>
    <property type="match status" value="1"/>
</dbReference>
<organism>
    <name type="scientific">Staurastrum punctulatum</name>
    <name type="common">Green alga</name>
    <name type="synonym">Cosmoastrum punctulatum</name>
    <dbReference type="NCBI Taxonomy" id="102822"/>
    <lineage>
        <taxon>Eukaryota</taxon>
        <taxon>Viridiplantae</taxon>
        <taxon>Streptophyta</taxon>
        <taxon>Zygnematophyceae</taxon>
        <taxon>Zygnematophycidae</taxon>
        <taxon>Desmidiales</taxon>
        <taxon>Desmidiaceae</taxon>
        <taxon>Staurastrum</taxon>
    </lineage>
</organism>
<name>PETL_STAPU</name>
<proteinExistence type="inferred from homology"/>